<reference key="1">
    <citation type="journal article" date="1991" name="Nucleic Acids Res.">
        <title>Nucleotide sequence of a cDNA encoding ribosomal acidic phosphoprotein P1 from Dictyostelium discoideum: identification of a novel carboxy-terminal sequence in 'A' proteins.</title>
        <authorList>
            <person name="Prieto J."/>
            <person name="Candel E."/>
            <person name="Coloma A."/>
        </authorList>
    </citation>
    <scope>NUCLEOTIDE SEQUENCE [MRNA]</scope>
    <source>
        <strain>AX3</strain>
    </source>
</reference>
<reference key="2">
    <citation type="journal article" date="2005" name="Nature">
        <title>The genome of the social amoeba Dictyostelium discoideum.</title>
        <authorList>
            <person name="Eichinger L."/>
            <person name="Pachebat J.A."/>
            <person name="Gloeckner G."/>
            <person name="Rajandream M.A."/>
            <person name="Sucgang R."/>
            <person name="Berriman M."/>
            <person name="Song J."/>
            <person name="Olsen R."/>
            <person name="Szafranski K."/>
            <person name="Xu Q."/>
            <person name="Tunggal B."/>
            <person name="Kummerfeld S."/>
            <person name="Madera M."/>
            <person name="Konfortov B.A."/>
            <person name="Rivero F."/>
            <person name="Bankier A.T."/>
            <person name="Lehmann R."/>
            <person name="Hamlin N."/>
            <person name="Davies R."/>
            <person name="Gaudet P."/>
            <person name="Fey P."/>
            <person name="Pilcher K."/>
            <person name="Chen G."/>
            <person name="Saunders D."/>
            <person name="Sodergren E.J."/>
            <person name="Davis P."/>
            <person name="Kerhornou A."/>
            <person name="Nie X."/>
            <person name="Hall N."/>
            <person name="Anjard C."/>
            <person name="Hemphill L."/>
            <person name="Bason N."/>
            <person name="Farbrother P."/>
            <person name="Desany B."/>
            <person name="Just E."/>
            <person name="Morio T."/>
            <person name="Rost R."/>
            <person name="Churcher C.M."/>
            <person name="Cooper J."/>
            <person name="Haydock S."/>
            <person name="van Driessche N."/>
            <person name="Cronin A."/>
            <person name="Goodhead I."/>
            <person name="Muzny D.M."/>
            <person name="Mourier T."/>
            <person name="Pain A."/>
            <person name="Lu M."/>
            <person name="Harper D."/>
            <person name="Lindsay R."/>
            <person name="Hauser H."/>
            <person name="James K.D."/>
            <person name="Quiles M."/>
            <person name="Madan Babu M."/>
            <person name="Saito T."/>
            <person name="Buchrieser C."/>
            <person name="Wardroper A."/>
            <person name="Felder M."/>
            <person name="Thangavelu M."/>
            <person name="Johnson D."/>
            <person name="Knights A."/>
            <person name="Loulseged H."/>
            <person name="Mungall K.L."/>
            <person name="Oliver K."/>
            <person name="Price C."/>
            <person name="Quail M.A."/>
            <person name="Urushihara H."/>
            <person name="Hernandez J."/>
            <person name="Rabbinowitsch E."/>
            <person name="Steffen D."/>
            <person name="Sanders M."/>
            <person name="Ma J."/>
            <person name="Kohara Y."/>
            <person name="Sharp S."/>
            <person name="Simmonds M.N."/>
            <person name="Spiegler S."/>
            <person name="Tivey A."/>
            <person name="Sugano S."/>
            <person name="White B."/>
            <person name="Walker D."/>
            <person name="Woodward J.R."/>
            <person name="Winckler T."/>
            <person name="Tanaka Y."/>
            <person name="Shaulsky G."/>
            <person name="Schleicher M."/>
            <person name="Weinstock G.M."/>
            <person name="Rosenthal A."/>
            <person name="Cox E.C."/>
            <person name="Chisholm R.L."/>
            <person name="Gibbs R.A."/>
            <person name="Loomis W.F."/>
            <person name="Platzer M."/>
            <person name="Kay R.R."/>
            <person name="Williams J.G."/>
            <person name="Dear P.H."/>
            <person name="Noegel A.A."/>
            <person name="Barrell B.G."/>
            <person name="Kuspa A."/>
        </authorList>
    </citation>
    <scope>NUCLEOTIDE SEQUENCE [LARGE SCALE GENOMIC DNA]</scope>
    <source>
        <strain>AX4</strain>
    </source>
</reference>
<evidence type="ECO:0000256" key="1">
    <source>
        <dbReference type="SAM" id="MobiDB-lite"/>
    </source>
</evidence>
<evidence type="ECO:0000305" key="2"/>
<proteinExistence type="inferred from homology"/>
<protein>
    <recommendedName>
        <fullName evidence="2">Large ribosomal subunit protein P1</fullName>
    </recommendedName>
    <alternativeName>
        <fullName>60S acidic ribosomal protein P1</fullName>
    </alternativeName>
</protein>
<organism>
    <name type="scientific">Dictyostelium discoideum</name>
    <name type="common">Social amoeba</name>
    <dbReference type="NCBI Taxonomy" id="44689"/>
    <lineage>
        <taxon>Eukaryota</taxon>
        <taxon>Amoebozoa</taxon>
        <taxon>Evosea</taxon>
        <taxon>Eumycetozoa</taxon>
        <taxon>Dictyostelia</taxon>
        <taxon>Dictyosteliales</taxon>
        <taxon>Dictyosteliaceae</taxon>
        <taxon>Dictyostelium</taxon>
    </lineage>
</organism>
<name>RLA1_DICDI</name>
<dbReference type="EMBL" id="X56193">
    <property type="protein sequence ID" value="CAA39656.1"/>
    <property type="molecule type" value="mRNA"/>
</dbReference>
<dbReference type="EMBL" id="AAFI02000023">
    <property type="protein sequence ID" value="EAL68126.1"/>
    <property type="molecule type" value="Genomic_DNA"/>
</dbReference>
<dbReference type="PIR" id="S14013">
    <property type="entry name" value="R6DOP1"/>
</dbReference>
<dbReference type="RefSeq" id="XP_642424.1">
    <property type="nucleotide sequence ID" value="XM_637332.1"/>
</dbReference>
<dbReference type="SMR" id="P22684"/>
<dbReference type="FunCoup" id="P22684">
    <property type="interactions" value="294"/>
</dbReference>
<dbReference type="STRING" id="44689.P22684"/>
<dbReference type="PaxDb" id="44689-DDB0214917"/>
<dbReference type="EnsemblProtists" id="EAL68126">
    <property type="protein sequence ID" value="EAL68126"/>
    <property type="gene ID" value="DDB_G0277907"/>
</dbReference>
<dbReference type="GeneID" id="8621629"/>
<dbReference type="KEGG" id="ddi:DDB_G0277907"/>
<dbReference type="dictyBase" id="DDB_G0277907">
    <property type="gene designation" value="rplP1"/>
</dbReference>
<dbReference type="VEuPathDB" id="AmoebaDB:DDB_G0277907"/>
<dbReference type="eggNOG" id="KOG1762">
    <property type="taxonomic scope" value="Eukaryota"/>
</dbReference>
<dbReference type="HOGENOM" id="CLU_114656_1_2_1"/>
<dbReference type="InParanoid" id="P22684"/>
<dbReference type="OMA" id="REELMCV"/>
<dbReference type="PhylomeDB" id="P22684"/>
<dbReference type="Reactome" id="R-DDI-156827">
    <property type="pathway name" value="L13a-mediated translational silencing of Ceruloplasmin expression"/>
</dbReference>
<dbReference type="Reactome" id="R-DDI-1799339">
    <property type="pathway name" value="SRP-dependent cotranslational protein targeting to membrane"/>
</dbReference>
<dbReference type="Reactome" id="R-DDI-72689">
    <property type="pathway name" value="Formation of a pool of free 40S subunits"/>
</dbReference>
<dbReference type="Reactome" id="R-DDI-72706">
    <property type="pathway name" value="GTP hydrolysis and joining of the 60S ribosomal subunit"/>
</dbReference>
<dbReference type="Reactome" id="R-DDI-975956">
    <property type="pathway name" value="Nonsense Mediated Decay (NMD) independent of the Exon Junction Complex (EJC)"/>
</dbReference>
<dbReference type="Reactome" id="R-DDI-975957">
    <property type="pathway name" value="Nonsense Mediated Decay (NMD) enhanced by the Exon Junction Complex (EJC)"/>
</dbReference>
<dbReference type="PRO" id="PR:P22684"/>
<dbReference type="Proteomes" id="UP000002195">
    <property type="component" value="Chromosome 3"/>
</dbReference>
<dbReference type="GO" id="GO:0022625">
    <property type="term" value="C:cytosolic large ribosomal subunit"/>
    <property type="evidence" value="ECO:0000318"/>
    <property type="project" value="GO_Central"/>
</dbReference>
<dbReference type="GO" id="GO:0030295">
    <property type="term" value="F:protein kinase activator activity"/>
    <property type="evidence" value="ECO:0000318"/>
    <property type="project" value="GO_Central"/>
</dbReference>
<dbReference type="GO" id="GO:0043021">
    <property type="term" value="F:ribonucleoprotein complex binding"/>
    <property type="evidence" value="ECO:0000318"/>
    <property type="project" value="GO_Central"/>
</dbReference>
<dbReference type="GO" id="GO:0003735">
    <property type="term" value="F:structural constituent of ribosome"/>
    <property type="evidence" value="ECO:0000318"/>
    <property type="project" value="GO_Central"/>
</dbReference>
<dbReference type="GO" id="GO:0002181">
    <property type="term" value="P:cytoplasmic translation"/>
    <property type="evidence" value="ECO:0000318"/>
    <property type="project" value="GO_Central"/>
</dbReference>
<dbReference type="GO" id="GO:0006414">
    <property type="term" value="P:translational elongation"/>
    <property type="evidence" value="ECO:0007669"/>
    <property type="project" value="InterPro"/>
</dbReference>
<dbReference type="CDD" id="cd05831">
    <property type="entry name" value="Ribosomal_P1"/>
    <property type="match status" value="1"/>
</dbReference>
<dbReference type="FunFam" id="1.10.10.1410:FF:000001">
    <property type="entry name" value="60S acidic ribosomal protein P1"/>
    <property type="match status" value="1"/>
</dbReference>
<dbReference type="Gene3D" id="1.10.10.1410">
    <property type="match status" value="1"/>
</dbReference>
<dbReference type="HAMAP" id="MF_01478">
    <property type="entry name" value="Ribosomal_L12_arch"/>
    <property type="match status" value="1"/>
</dbReference>
<dbReference type="InterPro" id="IPR038716">
    <property type="entry name" value="P1/P2_N_sf"/>
</dbReference>
<dbReference type="InterPro" id="IPR027534">
    <property type="entry name" value="Ribosomal_P1/P2"/>
</dbReference>
<dbReference type="PANTHER" id="PTHR45696">
    <property type="entry name" value="60S ACIDIC RIBOSOMAL PROTEIN P1"/>
    <property type="match status" value="1"/>
</dbReference>
<dbReference type="PANTHER" id="PTHR45696:SF10">
    <property type="entry name" value="LARGE RIBOSOMAL SUBUNIT PROTEIN P1"/>
    <property type="match status" value="1"/>
</dbReference>
<dbReference type="Pfam" id="PF00428">
    <property type="entry name" value="Ribosomal_60s"/>
    <property type="match status" value="1"/>
</dbReference>
<gene>
    <name type="primary">rplp1</name>
    <name type="ORF">DDB_G0277907</name>
</gene>
<sequence length="113" mass="11704">MSEIKTEELACIYSGLLLQDDGIEITADKIKTLLEAANITVASHWPGLYARSLAKVNIPELLLNAGSSGAAGAAPVAAATSAAAPAAAAKKETKKEEVKKEESDDDMGMGLFD</sequence>
<feature type="chain" id="PRO_0000157691" description="Large ribosomal subunit protein P1">
    <location>
        <begin position="1"/>
        <end position="113"/>
    </location>
</feature>
<feature type="region of interest" description="Disordered" evidence="1">
    <location>
        <begin position="84"/>
        <end position="113"/>
    </location>
</feature>
<feature type="compositionally biased region" description="Basic and acidic residues" evidence="1">
    <location>
        <begin position="89"/>
        <end position="102"/>
    </location>
</feature>
<accession>P22684</accession>
<accession>Q54XX8</accession>
<keyword id="KW-1185">Reference proteome</keyword>
<keyword id="KW-0687">Ribonucleoprotein</keyword>
<keyword id="KW-0689">Ribosomal protein</keyword>
<comment type="function">
    <text>Plays an important role in the elongation step of protein synthesis.</text>
</comment>
<comment type="subunit">
    <text>P1 and P2 exist as dimers at the large ribosomal subunit.</text>
</comment>
<comment type="similarity">
    <text evidence="2">Belongs to the eukaryotic ribosomal protein P1/P2 family.</text>
</comment>